<keyword id="KW-0378">Hydrolase</keyword>
<keyword id="KW-0441">Lipid A biosynthesis</keyword>
<keyword id="KW-0444">Lipid biosynthesis</keyword>
<keyword id="KW-0443">Lipid metabolism</keyword>
<keyword id="KW-0479">Metal-binding</keyword>
<keyword id="KW-0862">Zinc</keyword>
<protein>
    <recommendedName>
        <fullName evidence="1">UDP-3-O-acyl-N-acetylglucosamine deacetylase</fullName>
        <shortName evidence="1">UDP-3-O-acyl-GlcNAc deacetylase</shortName>
        <ecNumber evidence="1">3.5.1.108</ecNumber>
    </recommendedName>
    <alternativeName>
        <fullName evidence="1">UDP-3-O-[R-3-hydroxymyristoyl]-N-acetylglucosamine deacetylase</fullName>
    </alternativeName>
</protein>
<reference key="1">
    <citation type="journal article" date="2007" name="Genes Dev.">
        <title>New insights into Acinetobacter baumannii pathogenesis revealed by high-density pyrosequencing and transposon mutagenesis.</title>
        <authorList>
            <person name="Smith M.G."/>
            <person name="Gianoulis T.A."/>
            <person name="Pukatzki S."/>
            <person name="Mekalanos J.J."/>
            <person name="Ornston L.N."/>
            <person name="Gerstein M."/>
            <person name="Snyder M."/>
        </authorList>
    </citation>
    <scope>NUCLEOTIDE SEQUENCE [LARGE SCALE GENOMIC DNA]</scope>
    <source>
        <strain>ATCC 17978 / DSM 105126 / CIP 53.77 / LMG 1025 / NCDC KC755 / 5377</strain>
    </source>
</reference>
<sequence>MVKQRTLNRVVKASGIGLHSGQKVMINFIPHTVDGGIVFRRIDLDPPVDIPANALLIQEAFMCSNLVTGDIKVGTIEHVMSAIAGLGIDNLIVEVSASEVPIMDGSAGPFIYLLMQGGLCEQDAPKKFIKILKPVEALIDDKKAIFSPHNGFQLNFTIDFDHPAFAKEYQSATIDFSTETFVYEVSEARTFGFMKDLDYLKANNLALGASLDNAIGVDDTGVVNEEGLRFADEFVRHKILDAVGDLYLLGHQIIAKFDGYKSGHALNNQLLRNVQSDPSNYEIVTFNDEKDCPIPYVSVT</sequence>
<accession>A3M9X5</accession>
<name>LPXC_ACIBT</name>
<proteinExistence type="inferred from homology"/>
<dbReference type="EC" id="3.5.1.108" evidence="1"/>
<dbReference type="EMBL" id="CP000521">
    <property type="protein sequence ID" value="ABO13719.2"/>
    <property type="molecule type" value="Genomic_DNA"/>
</dbReference>
<dbReference type="RefSeq" id="WP_000240697.1">
    <property type="nucleotide sequence ID" value="NZ_CACVBA010000001.1"/>
</dbReference>
<dbReference type="SMR" id="A3M9X5"/>
<dbReference type="KEGG" id="acb:A1S_3330"/>
<dbReference type="HOGENOM" id="CLU_046528_1_0_6"/>
<dbReference type="UniPathway" id="UPA00359">
    <property type="reaction ID" value="UER00478"/>
</dbReference>
<dbReference type="GO" id="GO:0016020">
    <property type="term" value="C:membrane"/>
    <property type="evidence" value="ECO:0007669"/>
    <property type="project" value="GOC"/>
</dbReference>
<dbReference type="GO" id="GO:0046872">
    <property type="term" value="F:metal ion binding"/>
    <property type="evidence" value="ECO:0007669"/>
    <property type="project" value="UniProtKB-KW"/>
</dbReference>
<dbReference type="GO" id="GO:0103117">
    <property type="term" value="F:UDP-3-O-acyl-N-acetylglucosamine deacetylase activity"/>
    <property type="evidence" value="ECO:0007669"/>
    <property type="project" value="UniProtKB-UniRule"/>
</dbReference>
<dbReference type="GO" id="GO:0009245">
    <property type="term" value="P:lipid A biosynthetic process"/>
    <property type="evidence" value="ECO:0007669"/>
    <property type="project" value="UniProtKB-UniRule"/>
</dbReference>
<dbReference type="Gene3D" id="3.30.230.20">
    <property type="entry name" value="lpxc deacetylase, domain 1"/>
    <property type="match status" value="1"/>
</dbReference>
<dbReference type="Gene3D" id="3.30.1700.10">
    <property type="entry name" value="lpxc deacetylase, domain 2"/>
    <property type="match status" value="1"/>
</dbReference>
<dbReference type="HAMAP" id="MF_00388">
    <property type="entry name" value="LpxC"/>
    <property type="match status" value="1"/>
</dbReference>
<dbReference type="InterPro" id="IPR020568">
    <property type="entry name" value="Ribosomal_Su5_D2-typ_SF"/>
</dbReference>
<dbReference type="InterPro" id="IPR004463">
    <property type="entry name" value="UDP-acyl_GlcNac_deAcase"/>
</dbReference>
<dbReference type="InterPro" id="IPR011334">
    <property type="entry name" value="UDP-acyl_GlcNac_deAcase_C"/>
</dbReference>
<dbReference type="InterPro" id="IPR015870">
    <property type="entry name" value="UDP-acyl_N-AcGlcN_deAcase_N"/>
</dbReference>
<dbReference type="NCBIfam" id="TIGR00325">
    <property type="entry name" value="lpxC"/>
    <property type="match status" value="1"/>
</dbReference>
<dbReference type="PANTHER" id="PTHR33694">
    <property type="entry name" value="UDP-3-O-ACYL-N-ACETYLGLUCOSAMINE DEACETYLASE 1, MITOCHONDRIAL-RELATED"/>
    <property type="match status" value="1"/>
</dbReference>
<dbReference type="PANTHER" id="PTHR33694:SF1">
    <property type="entry name" value="UDP-3-O-ACYL-N-ACETYLGLUCOSAMINE DEACETYLASE 1, MITOCHONDRIAL-RELATED"/>
    <property type="match status" value="1"/>
</dbReference>
<dbReference type="Pfam" id="PF03331">
    <property type="entry name" value="LpxC"/>
    <property type="match status" value="1"/>
</dbReference>
<dbReference type="SUPFAM" id="SSF54211">
    <property type="entry name" value="Ribosomal protein S5 domain 2-like"/>
    <property type="match status" value="2"/>
</dbReference>
<evidence type="ECO:0000255" key="1">
    <source>
        <dbReference type="HAMAP-Rule" id="MF_00388"/>
    </source>
</evidence>
<comment type="function">
    <text evidence="1">Catalyzes the hydrolysis of UDP-3-O-myristoyl-N-acetylglucosamine to form UDP-3-O-myristoylglucosamine and acetate, the committed step in lipid A biosynthesis.</text>
</comment>
<comment type="catalytic activity">
    <reaction evidence="1">
        <text>a UDP-3-O-[(3R)-3-hydroxyacyl]-N-acetyl-alpha-D-glucosamine + H2O = a UDP-3-O-[(3R)-3-hydroxyacyl]-alpha-D-glucosamine + acetate</text>
        <dbReference type="Rhea" id="RHEA:67816"/>
        <dbReference type="ChEBI" id="CHEBI:15377"/>
        <dbReference type="ChEBI" id="CHEBI:30089"/>
        <dbReference type="ChEBI" id="CHEBI:137740"/>
        <dbReference type="ChEBI" id="CHEBI:173225"/>
        <dbReference type="EC" id="3.5.1.108"/>
    </reaction>
</comment>
<comment type="cofactor">
    <cofactor evidence="1">
        <name>Zn(2+)</name>
        <dbReference type="ChEBI" id="CHEBI:29105"/>
    </cofactor>
</comment>
<comment type="pathway">
    <text evidence="1">Glycolipid biosynthesis; lipid IV(A) biosynthesis; lipid IV(A) from (3R)-3-hydroxytetradecanoyl-[acyl-carrier-protein] and UDP-N-acetyl-alpha-D-glucosamine: step 2/6.</text>
</comment>
<comment type="similarity">
    <text evidence="1">Belongs to the LpxC family.</text>
</comment>
<gene>
    <name evidence="1" type="primary">lpxC</name>
    <name type="ordered locus">A1S_3330</name>
</gene>
<feature type="chain" id="PRO_1000190878" description="UDP-3-O-acyl-N-acetylglucosamine deacetylase">
    <location>
        <begin position="1"/>
        <end position="300"/>
    </location>
</feature>
<feature type="active site" description="Proton donor" evidence="1">
    <location>
        <position position="264"/>
    </location>
</feature>
<feature type="binding site" evidence="1">
    <location>
        <position position="78"/>
    </location>
    <ligand>
        <name>Zn(2+)</name>
        <dbReference type="ChEBI" id="CHEBI:29105"/>
    </ligand>
</feature>
<feature type="binding site" evidence="1">
    <location>
        <position position="237"/>
    </location>
    <ligand>
        <name>Zn(2+)</name>
        <dbReference type="ChEBI" id="CHEBI:29105"/>
    </ligand>
</feature>
<feature type="binding site" evidence="1">
    <location>
        <position position="241"/>
    </location>
    <ligand>
        <name>Zn(2+)</name>
        <dbReference type="ChEBI" id="CHEBI:29105"/>
    </ligand>
</feature>
<organism>
    <name type="scientific">Acinetobacter baumannii (strain ATCC 17978 / DSM 105126 / CIP 53.77 / LMG 1025 / NCDC KC755 / 5377)</name>
    <dbReference type="NCBI Taxonomy" id="400667"/>
    <lineage>
        <taxon>Bacteria</taxon>
        <taxon>Pseudomonadati</taxon>
        <taxon>Pseudomonadota</taxon>
        <taxon>Gammaproteobacteria</taxon>
        <taxon>Moraxellales</taxon>
        <taxon>Moraxellaceae</taxon>
        <taxon>Acinetobacter</taxon>
        <taxon>Acinetobacter calcoaceticus/baumannii complex</taxon>
    </lineage>
</organism>